<comment type="subcellular location">
    <subcellularLocation>
        <location evidence="1">Secreted</location>
    </subcellularLocation>
</comment>
<comment type="tissue specificity">
    <text evidence="3">Expressed by the venom gland.</text>
</comment>
<comment type="similarity">
    <text evidence="3">Belongs to the non-disulfide-bridged peptide (NDBP) superfamily. Short antimicrobial peptide (group 4) family.</text>
</comment>
<protein>
    <recommendedName>
        <fullName evidence="2">Venom peptide 3</fullName>
    </recommendedName>
    <component>
        <recommendedName>
            <fullName evidence="2">Venom peptide 4</fullName>
        </recommendedName>
    </component>
    <component>
        <recommendedName>
            <fullName evidence="2">Venom peptide 5</fullName>
        </recommendedName>
    </component>
</protein>
<proteinExistence type="evidence at protein level"/>
<accession>P86826</accession>
<feature type="peptide" id="PRO_0000401152" description="Venom peptide 3" evidence="1">
    <location>
        <begin position="1"/>
        <end position="9"/>
    </location>
</feature>
<feature type="peptide" id="PRO_0000401153" description="Venom peptide 4" evidence="1">
    <location>
        <begin position="1"/>
        <end position="8"/>
    </location>
</feature>
<feature type="peptide" id="PRO_0000401154" description="Venom peptide 5" evidence="1">
    <location>
        <begin position="1"/>
        <end position="7"/>
    </location>
</feature>
<sequence>YDRYEVVYR</sequence>
<reference key="1">
    <citation type="journal article" date="2008" name="Toxicon">
        <title>Tityus serrulatus venom peptidomics: assessing venom peptide diversity.</title>
        <authorList>
            <person name="Rates B."/>
            <person name="Ferraz K.K."/>
            <person name="Borges M.H."/>
            <person name="Richardson M."/>
            <person name="De Lima M.E."/>
            <person name="Pimenta A.M."/>
        </authorList>
    </citation>
    <scope>PROTEIN SEQUENCE</scope>
    <scope>SUBCELLULAR LOCATION</scope>
    <source>
        <tissue>Venom</tissue>
    </source>
</reference>
<name>NDB4T_TITSE</name>
<dbReference type="GO" id="GO:0005576">
    <property type="term" value="C:extracellular region"/>
    <property type="evidence" value="ECO:0007669"/>
    <property type="project" value="UniProtKB-SubCell"/>
</dbReference>
<organism>
    <name type="scientific">Tityus serrulatus</name>
    <name type="common">Brazilian scorpion</name>
    <dbReference type="NCBI Taxonomy" id="6887"/>
    <lineage>
        <taxon>Eukaryota</taxon>
        <taxon>Metazoa</taxon>
        <taxon>Ecdysozoa</taxon>
        <taxon>Arthropoda</taxon>
        <taxon>Chelicerata</taxon>
        <taxon>Arachnida</taxon>
        <taxon>Scorpiones</taxon>
        <taxon>Buthida</taxon>
        <taxon>Buthoidea</taxon>
        <taxon>Buthidae</taxon>
        <taxon>Tityus</taxon>
    </lineage>
</organism>
<keyword id="KW-0903">Direct protein sequencing</keyword>
<keyword id="KW-0964">Secreted</keyword>
<evidence type="ECO:0000269" key="1">
    <source>
    </source>
</evidence>
<evidence type="ECO:0000303" key="2">
    <source>
    </source>
</evidence>
<evidence type="ECO:0000305" key="3"/>